<dbReference type="EC" id="3.4.23.36" evidence="1"/>
<dbReference type="EMBL" id="AE009949">
    <property type="protein sequence ID" value="AAL97540.1"/>
    <property type="molecule type" value="Genomic_DNA"/>
</dbReference>
<dbReference type="RefSeq" id="WP_011017647.1">
    <property type="nucleotide sequence ID" value="NC_003485.1"/>
</dbReference>
<dbReference type="SMR" id="Q8P1G4"/>
<dbReference type="KEGG" id="spm:spyM18_0888"/>
<dbReference type="HOGENOM" id="CLU_083252_3_3_9"/>
<dbReference type="UniPathway" id="UPA00665"/>
<dbReference type="GO" id="GO:0005886">
    <property type="term" value="C:plasma membrane"/>
    <property type="evidence" value="ECO:0007669"/>
    <property type="project" value="UniProtKB-SubCell"/>
</dbReference>
<dbReference type="GO" id="GO:0004190">
    <property type="term" value="F:aspartic-type endopeptidase activity"/>
    <property type="evidence" value="ECO:0007669"/>
    <property type="project" value="UniProtKB-UniRule"/>
</dbReference>
<dbReference type="GO" id="GO:0006508">
    <property type="term" value="P:proteolysis"/>
    <property type="evidence" value="ECO:0007669"/>
    <property type="project" value="UniProtKB-KW"/>
</dbReference>
<dbReference type="HAMAP" id="MF_00161">
    <property type="entry name" value="LspA"/>
    <property type="match status" value="1"/>
</dbReference>
<dbReference type="InterPro" id="IPR001872">
    <property type="entry name" value="Peptidase_A8"/>
</dbReference>
<dbReference type="NCBIfam" id="TIGR00077">
    <property type="entry name" value="lspA"/>
    <property type="match status" value="1"/>
</dbReference>
<dbReference type="PANTHER" id="PTHR33695">
    <property type="entry name" value="LIPOPROTEIN SIGNAL PEPTIDASE"/>
    <property type="match status" value="1"/>
</dbReference>
<dbReference type="PANTHER" id="PTHR33695:SF1">
    <property type="entry name" value="LIPOPROTEIN SIGNAL PEPTIDASE"/>
    <property type="match status" value="1"/>
</dbReference>
<dbReference type="Pfam" id="PF01252">
    <property type="entry name" value="Peptidase_A8"/>
    <property type="match status" value="1"/>
</dbReference>
<dbReference type="PRINTS" id="PR00781">
    <property type="entry name" value="LIPOSIGPTASE"/>
</dbReference>
<dbReference type="PROSITE" id="PS00855">
    <property type="entry name" value="SPASE_II"/>
    <property type="match status" value="1"/>
</dbReference>
<protein>
    <recommendedName>
        <fullName evidence="1">Lipoprotein signal peptidase</fullName>
        <ecNumber evidence="1">3.4.23.36</ecNumber>
    </recommendedName>
    <alternativeName>
        <fullName evidence="1">Prolipoprotein signal peptidase</fullName>
    </alternativeName>
    <alternativeName>
        <fullName evidence="1">Signal peptidase II</fullName>
        <shortName evidence="1">SPase II</shortName>
    </alternativeName>
</protein>
<proteinExistence type="inferred from homology"/>
<keyword id="KW-0064">Aspartyl protease</keyword>
<keyword id="KW-1003">Cell membrane</keyword>
<keyword id="KW-0378">Hydrolase</keyword>
<keyword id="KW-0472">Membrane</keyword>
<keyword id="KW-0645">Protease</keyword>
<keyword id="KW-0812">Transmembrane</keyword>
<keyword id="KW-1133">Transmembrane helix</keyword>
<reference key="1">
    <citation type="journal article" date="2002" name="Proc. Natl. Acad. Sci. U.S.A.">
        <title>Genome sequence and comparative microarray analysis of serotype M18 group A Streptococcus strains associated with acute rheumatic fever outbreaks.</title>
        <authorList>
            <person name="Smoot J.C."/>
            <person name="Barbian K.D."/>
            <person name="Van Gompel J.J."/>
            <person name="Smoot L.M."/>
            <person name="Chaussee M.S."/>
            <person name="Sylva G.L."/>
            <person name="Sturdevant D.E."/>
            <person name="Ricklefs S.M."/>
            <person name="Porcella S.F."/>
            <person name="Parkins L.D."/>
            <person name="Beres S.B."/>
            <person name="Campbell D.S."/>
            <person name="Smith T.M."/>
            <person name="Zhang Q."/>
            <person name="Kapur V."/>
            <person name="Daly J.A."/>
            <person name="Veasy L.G."/>
            <person name="Musser J.M."/>
        </authorList>
    </citation>
    <scope>NUCLEOTIDE SEQUENCE [LARGE SCALE GENOMIC DNA]</scope>
    <source>
        <strain>MGAS8232</strain>
    </source>
</reference>
<name>LSPA_STRP8</name>
<organism>
    <name type="scientific">Streptococcus pyogenes serotype M18 (strain MGAS8232)</name>
    <dbReference type="NCBI Taxonomy" id="186103"/>
    <lineage>
        <taxon>Bacteria</taxon>
        <taxon>Bacillati</taxon>
        <taxon>Bacillota</taxon>
        <taxon>Bacilli</taxon>
        <taxon>Lactobacillales</taxon>
        <taxon>Streptococcaceae</taxon>
        <taxon>Streptococcus</taxon>
    </lineage>
</organism>
<comment type="function">
    <text evidence="1">This protein specifically catalyzes the removal of signal peptides from prolipoproteins.</text>
</comment>
<comment type="catalytic activity">
    <reaction evidence="1">
        <text>Release of signal peptides from bacterial membrane prolipoproteins. Hydrolyzes -Xaa-Yaa-Zaa-|-(S,diacylglyceryl)Cys-, in which Xaa is hydrophobic (preferably Leu), and Yaa (Ala or Ser) and Zaa (Gly or Ala) have small, neutral side chains.</text>
        <dbReference type="EC" id="3.4.23.36"/>
    </reaction>
</comment>
<comment type="pathway">
    <text evidence="1">Protein modification; lipoprotein biosynthesis (signal peptide cleavage).</text>
</comment>
<comment type="subcellular location">
    <subcellularLocation>
        <location evidence="1">Cell membrane</location>
        <topology evidence="1">Multi-pass membrane protein</topology>
    </subcellularLocation>
</comment>
<comment type="similarity">
    <text evidence="1">Belongs to the peptidase A8 family.</text>
</comment>
<evidence type="ECO:0000255" key="1">
    <source>
        <dbReference type="HAMAP-Rule" id="MF_00161"/>
    </source>
</evidence>
<feature type="chain" id="PRO_0000178826" description="Lipoprotein signal peptidase">
    <location>
        <begin position="1"/>
        <end position="152"/>
    </location>
</feature>
<feature type="transmembrane region" description="Helical" evidence="1">
    <location>
        <begin position="5"/>
        <end position="25"/>
    </location>
</feature>
<feature type="transmembrane region" description="Helical" evidence="1">
    <location>
        <begin position="61"/>
        <end position="81"/>
    </location>
</feature>
<feature type="transmembrane region" description="Helical" evidence="1">
    <location>
        <begin position="84"/>
        <end position="104"/>
    </location>
</feature>
<feature type="transmembrane region" description="Helical" evidence="1">
    <location>
        <begin position="125"/>
        <end position="145"/>
    </location>
</feature>
<feature type="active site" evidence="1">
    <location>
        <position position="114"/>
    </location>
</feature>
<feature type="active site" evidence="1">
    <location>
        <position position="130"/>
    </location>
</feature>
<gene>
    <name evidence="1" type="primary">lspA</name>
    <name type="ordered locus">spyM18_0888</name>
</gene>
<sequence>MKKRLFVLSLILLVALDQLSKFWIVSHIALGEVKPFIPGIVSLTYLQNNGAAFSILQDQQWFFVVITVLVIGYAIYYLATHPHLNIWKQLALLLIISGGIGNFIDRLRLAYVIDMIHLDFVDFAIFNVADSYLTVGVILLVICLWKEEDYGN</sequence>
<accession>Q8P1G4</accession>